<accession>P44238</accession>
<reference key="1">
    <citation type="journal article" date="1995" name="Science">
        <title>Whole-genome random sequencing and assembly of Haemophilus influenzae Rd.</title>
        <authorList>
            <person name="Fleischmann R.D."/>
            <person name="Adams M.D."/>
            <person name="White O."/>
            <person name="Clayton R.A."/>
            <person name="Kirkness E.F."/>
            <person name="Kerlavage A.R."/>
            <person name="Bult C.J."/>
            <person name="Tomb J.-F."/>
            <person name="Dougherty B.A."/>
            <person name="Merrick J.M."/>
            <person name="McKenney K."/>
            <person name="Sutton G.G."/>
            <person name="FitzHugh W."/>
            <person name="Fields C.A."/>
            <person name="Gocayne J.D."/>
            <person name="Scott J.D."/>
            <person name="Shirley R."/>
            <person name="Liu L.-I."/>
            <person name="Glodek A."/>
            <person name="Kelley J.M."/>
            <person name="Weidman J.F."/>
            <person name="Phillips C.A."/>
            <person name="Spriggs T."/>
            <person name="Hedblom E."/>
            <person name="Cotton M.D."/>
            <person name="Utterback T.R."/>
            <person name="Hanna M.C."/>
            <person name="Nguyen D.T."/>
            <person name="Saudek D.M."/>
            <person name="Brandon R.C."/>
            <person name="Fine L.D."/>
            <person name="Fritchman J.L."/>
            <person name="Fuhrmann J.L."/>
            <person name="Geoghagen N.S.M."/>
            <person name="Gnehm C.L."/>
            <person name="McDonald L.A."/>
            <person name="Small K.V."/>
            <person name="Fraser C.M."/>
            <person name="Smith H.O."/>
            <person name="Venter J.C."/>
        </authorList>
    </citation>
    <scope>NUCLEOTIDE SEQUENCE [LARGE SCALE GENOMIC DNA]</scope>
    <source>
        <strain>ATCC 51907 / DSM 11121 / KW20 / Rd</strain>
    </source>
</reference>
<organism>
    <name type="scientific">Haemophilus influenzae (strain ATCC 51907 / DSM 11121 / KW20 / Rd)</name>
    <dbReference type="NCBI Taxonomy" id="71421"/>
    <lineage>
        <taxon>Bacteria</taxon>
        <taxon>Pseudomonadati</taxon>
        <taxon>Pseudomonadota</taxon>
        <taxon>Gammaproteobacteria</taxon>
        <taxon>Pasteurellales</taxon>
        <taxon>Pasteurellaceae</taxon>
        <taxon>Haemophilus</taxon>
    </lineage>
</organism>
<sequence>MQAINRIIAPLKRGLQLLVSRAVVSVVNDAYARQNLQLRLQSEEVADDVERFQNYGHYSVPKAGEAIVVSVGGKRSHLVAVVVDDKSVRPAGLIAGDSVLYHLEGHQLRLTENGEAILSCKKFTIETDTLDCSAQQITFDSPQTTFTGNVDIMGISTATDHQSSGISGKNHDHEERVGKPVP</sequence>
<feature type="chain" id="PRO_0000077839" description="Mu-like prophage FluMu protein gp45">
    <location>
        <begin position="1"/>
        <end position="182"/>
    </location>
</feature>
<feature type="region of interest" description="Disordered" evidence="1">
    <location>
        <begin position="159"/>
        <end position="182"/>
    </location>
</feature>
<feature type="compositionally biased region" description="Basic and acidic residues" evidence="1">
    <location>
        <begin position="169"/>
        <end position="182"/>
    </location>
</feature>
<evidence type="ECO:0000256" key="1">
    <source>
        <dbReference type="SAM" id="MobiDB-lite"/>
    </source>
</evidence>
<evidence type="ECO:0000305" key="2"/>
<keyword id="KW-1185">Reference proteome</keyword>
<dbReference type="EMBL" id="L42023">
    <property type="protein sequence ID" value="AAC23168.1"/>
    <property type="molecule type" value="Genomic_DNA"/>
</dbReference>
<dbReference type="PIR" id="E64034">
    <property type="entry name" value="E64034"/>
</dbReference>
<dbReference type="RefSeq" id="NP_439667.1">
    <property type="nucleotide sequence ID" value="NC_000907.1"/>
</dbReference>
<dbReference type="STRING" id="71421.HI_1518"/>
<dbReference type="EnsemblBacteria" id="AAC23168">
    <property type="protein sequence ID" value="AAC23168"/>
    <property type="gene ID" value="HI_1518"/>
</dbReference>
<dbReference type="KEGG" id="hin:HI_1518"/>
<dbReference type="PATRIC" id="fig|71421.8.peg.1589"/>
<dbReference type="eggNOG" id="COG4384">
    <property type="taxonomic scope" value="Bacteria"/>
</dbReference>
<dbReference type="HOGENOM" id="CLU_108409_3_1_6"/>
<dbReference type="OrthoDB" id="9802994at2"/>
<dbReference type="PhylomeDB" id="P44238"/>
<dbReference type="BioCyc" id="HINF71421:G1GJ1-1540-MONOMER"/>
<dbReference type="Proteomes" id="UP000000579">
    <property type="component" value="Chromosome"/>
</dbReference>
<dbReference type="InterPro" id="IPR013046">
    <property type="entry name" value="GpV/Gp45"/>
</dbReference>
<dbReference type="InterPro" id="IPR014462">
    <property type="entry name" value="Phage_Mu_Gp45"/>
</dbReference>
<dbReference type="InterPro" id="IPR053861">
    <property type="entry name" value="Phage_Mu_Gp45_N"/>
</dbReference>
<dbReference type="NCBIfam" id="TIGR01644">
    <property type="entry name" value="phage_P2_V"/>
    <property type="match status" value="1"/>
</dbReference>
<dbReference type="Pfam" id="PF06890">
    <property type="entry name" value="Phage_Mu_Gp45"/>
    <property type="match status" value="1"/>
</dbReference>
<dbReference type="PIRSF" id="PIRSF012337">
    <property type="entry name" value="gp45"/>
    <property type="match status" value="1"/>
</dbReference>
<proteinExistence type="predicted"/>
<comment type="similarity">
    <text evidence="2">To phage Mu protein gp45.</text>
</comment>
<gene>
    <name type="ordered locus">HI_1518</name>
</gene>
<protein>
    <recommendedName>
        <fullName>Mu-like prophage FluMu protein gp45</fullName>
    </recommendedName>
</protein>
<name>VG45_HAEIN</name>